<evidence type="ECO:0000250" key="1"/>
<evidence type="ECO:0000250" key="2">
    <source>
        <dbReference type="UniProtKB" id="Q13131"/>
    </source>
</evidence>
<evidence type="ECO:0000250" key="3">
    <source>
        <dbReference type="UniProtKB" id="Q8CFH6"/>
    </source>
</evidence>
<evidence type="ECO:0000255" key="4">
    <source>
        <dbReference type="PROSITE-ProRule" id="PRU00159"/>
    </source>
</evidence>
<evidence type="ECO:0000255" key="5">
    <source>
        <dbReference type="PROSITE-ProRule" id="PRU00212"/>
    </source>
</evidence>
<evidence type="ECO:0000255" key="6">
    <source>
        <dbReference type="PROSITE-ProRule" id="PRU10027"/>
    </source>
</evidence>
<evidence type="ECO:0000256" key="7">
    <source>
        <dbReference type="SAM" id="MobiDB-lite"/>
    </source>
</evidence>
<evidence type="ECO:0000269" key="8">
    <source>
    </source>
</evidence>
<evidence type="ECO:0000269" key="9">
    <source>
    </source>
</evidence>
<evidence type="ECO:0000269" key="10">
    <source>
    </source>
</evidence>
<evidence type="ECO:0000269" key="11">
    <source>
    </source>
</evidence>
<evidence type="ECO:0000269" key="12">
    <source>
    </source>
</evidence>
<evidence type="ECO:0000269" key="13">
    <source>
    </source>
</evidence>
<evidence type="ECO:0000269" key="14">
    <source>
    </source>
</evidence>
<evidence type="ECO:0000269" key="15">
    <source>
    </source>
</evidence>
<evidence type="ECO:0000305" key="16"/>
<evidence type="ECO:0000312" key="17">
    <source>
        <dbReference type="EMBL" id="AAH13612.1"/>
    </source>
</evidence>
<evidence type="ECO:0000312" key="18">
    <source>
        <dbReference type="EMBL" id="AAH78150.1"/>
    </source>
</evidence>
<evidence type="ECO:0000312" key="19">
    <source>
        <dbReference type="EMBL" id="BAA34501.3"/>
    </source>
</evidence>
<evidence type="ECO:0000312" key="20">
    <source>
        <dbReference type="EMBL" id="BAB91442.1"/>
    </source>
</evidence>
<evidence type="ECO:0000312" key="21">
    <source>
        <dbReference type="EMBL" id="CAB66698.1"/>
    </source>
</evidence>
<evidence type="ECO:0007744" key="22">
    <source>
    </source>
</evidence>
<evidence type="ECO:0007744" key="23">
    <source>
    </source>
</evidence>
<evidence type="ECO:0007744" key="24">
    <source>
    </source>
</evidence>
<evidence type="ECO:0007744" key="25">
    <source>
    </source>
</evidence>
<evidence type="ECO:0007744" key="26">
    <source>
    </source>
</evidence>
<proteinExistence type="evidence at protein level"/>
<name>SIK2_HUMAN</name>
<organism>
    <name type="scientific">Homo sapiens</name>
    <name type="common">Human</name>
    <dbReference type="NCBI Taxonomy" id="9606"/>
    <lineage>
        <taxon>Eukaryota</taxon>
        <taxon>Metazoa</taxon>
        <taxon>Chordata</taxon>
        <taxon>Craniata</taxon>
        <taxon>Vertebrata</taxon>
        <taxon>Euteleostomi</taxon>
        <taxon>Mammalia</taxon>
        <taxon>Eutheria</taxon>
        <taxon>Euarchontoglires</taxon>
        <taxon>Primates</taxon>
        <taxon>Haplorrhini</taxon>
        <taxon>Catarrhini</taxon>
        <taxon>Hominidae</taxon>
        <taxon>Homo</taxon>
    </lineage>
</organism>
<gene>
    <name type="primary">SIK2</name>
    <name evidence="19" type="synonym">KIAA0781</name>
    <name type="synonym">QIK</name>
    <name type="synonym">SNF1LK2</name>
</gene>
<accession>Q9H0K1</accession>
<accession>A8K5B8</accession>
<accession>B0YJ94</accession>
<accession>O94878</accession>
<accession>Q17RV0</accession>
<accession>Q6AZE2</accession>
<accession>Q76N03</accession>
<accession>Q8NCV7</accession>
<accession>Q96CZ8</accession>
<comment type="function">
    <text evidence="3 9 11 12 14">Serine/threonine-protein kinase that plays a role in many biological processes such as fatty acid oxidation, autophagy, immune response or glucose metabolism (PubMed:23322770, PubMed:26983400). Phosphorylates 'Ser-794' of IRS1 in insulin-stimulated adipocytes, potentially modulating the efficiency of insulin signal transduction. Inhibits CREB activity by phosphorylating and repressing TORCs, the CREB-specific coactivators (PubMed:15454081). Phosphorylates EP300 and thus inhibits its histone acetyltransferase activity (PubMed:21084751, PubMed:26983400). In turn, regulates the DNA-binding ability of several transcription factors such as PPARA or MLXIPL (PubMed:21084751, PubMed:26983400). Also plays a role in thymic T-cell development (By similarity).</text>
</comment>
<comment type="catalytic activity">
    <reaction evidence="8 13">
        <text>L-seryl-[protein] + ATP = O-phospho-L-seryl-[protein] + ADP + H(+)</text>
        <dbReference type="Rhea" id="RHEA:17989"/>
        <dbReference type="Rhea" id="RHEA-COMP:9863"/>
        <dbReference type="Rhea" id="RHEA-COMP:11604"/>
        <dbReference type="ChEBI" id="CHEBI:15378"/>
        <dbReference type="ChEBI" id="CHEBI:29999"/>
        <dbReference type="ChEBI" id="CHEBI:30616"/>
        <dbReference type="ChEBI" id="CHEBI:83421"/>
        <dbReference type="ChEBI" id="CHEBI:456216"/>
        <dbReference type="EC" id="2.7.11.1"/>
    </reaction>
</comment>
<comment type="catalytic activity">
    <reaction evidence="8">
        <text>L-threonyl-[protein] + ATP = O-phospho-L-threonyl-[protein] + ADP + H(+)</text>
        <dbReference type="Rhea" id="RHEA:46608"/>
        <dbReference type="Rhea" id="RHEA-COMP:11060"/>
        <dbReference type="Rhea" id="RHEA-COMP:11605"/>
        <dbReference type="ChEBI" id="CHEBI:15378"/>
        <dbReference type="ChEBI" id="CHEBI:30013"/>
        <dbReference type="ChEBI" id="CHEBI:30616"/>
        <dbReference type="ChEBI" id="CHEBI:61977"/>
        <dbReference type="ChEBI" id="CHEBI:456216"/>
        <dbReference type="EC" id="2.7.11.1"/>
    </reaction>
</comment>
<comment type="cofactor">
    <cofactor evidence="8">
        <name>Mg(2+)</name>
        <dbReference type="ChEBI" id="CHEBI:18420"/>
    </cofactor>
</comment>
<comment type="activity regulation">
    <text evidence="8">Activated by phosphorylation on Thr-175.</text>
</comment>
<comment type="subunit">
    <text evidence="9">Interacts with and phosphorylates TORC2/CRTC2.</text>
</comment>
<comment type="interaction">
    <interactant intactId="EBI-1181664">
        <id>Q9H0K1</id>
    </interactant>
    <interactant intactId="EBI-1053100">
        <id>Q9BV73</id>
        <label>CEP250</label>
    </interactant>
    <organismsDiffer>false</organismsDiffer>
    <experiments>5</experiments>
</comment>
<comment type="interaction">
    <interactant intactId="EBI-1181664">
        <id>Q9H0K1</id>
    </interactant>
    <interactant intactId="EBI-720116">
        <id>P60520</id>
        <label>GABARAPL2</label>
    </interactant>
    <organismsDiffer>false</organismsDiffer>
    <experiments>3</experiments>
</comment>
<comment type="interaction">
    <interactant intactId="EBI-1181664">
        <id>Q9H0K1</id>
    </interactant>
    <interactant intactId="EBI-79464">
        <id>P27986</id>
        <label>PIK3R1</label>
    </interactant>
    <organismsDiffer>false</organismsDiffer>
    <experiments>7</experiments>
</comment>
<comment type="interaction">
    <interactant intactId="EBI-1181664">
        <id>Q9H0K1</id>
    </interactant>
    <interactant intactId="EBI-355164">
        <id>P55072</id>
        <label>VCP</label>
    </interactant>
    <organismsDiffer>false</organismsDiffer>
    <experiments>4</experiments>
</comment>
<comment type="subcellular location">
    <subcellularLocation>
        <location evidence="1">Cytoplasm</location>
    </subcellularLocation>
    <subcellularLocation>
        <location evidence="13">Endoplasmic reticulum membrane</location>
    </subcellularLocation>
</comment>
<comment type="PTM">
    <text evidence="8 15">Phosphorylated at Thr-175 by STK11/LKB1 in complex with STE20-related adapter-alpha (STRADA) pseudo kinase and CAB39 (PubMed:14976552). Phosphorylated at Thr-484 in response to insulin in adipocytes (PubMed:30586628).</text>
</comment>
<comment type="PTM">
    <text evidence="12">Acetylation at Lys-53 inhibits kinase activity. Deacetylated by HDAC6.</text>
</comment>
<comment type="similarity">
    <text evidence="16">Belongs to the protein kinase superfamily. CAMK Ser/Thr protein kinase family. SNF1 subfamily.</text>
</comment>
<comment type="sequence caution" evidence="16">
    <conflict type="erroneous initiation">
        <sequence resource="EMBL-CDS" id="BAA34501"/>
    </conflict>
</comment>
<feature type="chain" id="PRO_0000086662" description="Serine/threonine-protein kinase SIK2">
    <location>
        <begin position="1"/>
        <end position="926"/>
    </location>
</feature>
<feature type="domain" description="Protein kinase" evidence="4">
    <location>
        <begin position="20"/>
        <end position="271"/>
    </location>
</feature>
<feature type="domain" description="UBA" evidence="5">
    <location>
        <begin position="295"/>
        <end position="335"/>
    </location>
</feature>
<feature type="region of interest" description="Disordered" evidence="7">
    <location>
        <begin position="644"/>
        <end position="666"/>
    </location>
</feature>
<feature type="region of interest" description="Disordered" evidence="7">
    <location>
        <begin position="742"/>
        <end position="776"/>
    </location>
</feature>
<feature type="region of interest" description="Disordered" evidence="7">
    <location>
        <begin position="801"/>
        <end position="896"/>
    </location>
</feature>
<feature type="compositionally biased region" description="Low complexity" evidence="7">
    <location>
        <begin position="644"/>
        <end position="659"/>
    </location>
</feature>
<feature type="compositionally biased region" description="Low complexity" evidence="7">
    <location>
        <begin position="742"/>
        <end position="756"/>
    </location>
</feature>
<feature type="compositionally biased region" description="Polar residues" evidence="7">
    <location>
        <begin position="765"/>
        <end position="774"/>
    </location>
</feature>
<feature type="compositionally biased region" description="Pro residues" evidence="7">
    <location>
        <begin position="822"/>
        <end position="834"/>
    </location>
</feature>
<feature type="active site" description="Proton acceptor" evidence="2 4 6">
    <location>
        <position position="142"/>
    </location>
</feature>
<feature type="binding site" evidence="2 4">
    <location>
        <begin position="26"/>
        <end position="34"/>
    </location>
    <ligand>
        <name>ATP</name>
        <dbReference type="ChEBI" id="CHEBI:30616"/>
    </ligand>
</feature>
<feature type="binding site" evidence="3 4">
    <location>
        <position position="49"/>
    </location>
    <ligand>
        <name>ATP</name>
        <dbReference type="ChEBI" id="CHEBI:30616"/>
    </ligand>
</feature>
<feature type="modified residue" description="Phosphothreonine" evidence="23">
    <location>
        <position position="25"/>
    </location>
</feature>
<feature type="modified residue" description="N6-acetyllysine; by EP300" evidence="12">
    <location>
        <position position="53"/>
    </location>
</feature>
<feature type="modified residue" description="Phosphothreonine; by LKB1" evidence="8">
    <location>
        <position position="175"/>
    </location>
</feature>
<feature type="modified residue" description="Phosphothreonine" evidence="15">
    <location>
        <position position="484"/>
    </location>
</feature>
<feature type="modified residue" description="Phosphoserine" evidence="3">
    <location>
        <position position="534"/>
    </location>
</feature>
<feature type="modified residue" description="Phosphoserine" evidence="22 24 25 26">
    <location>
        <position position="587"/>
    </location>
</feature>
<feature type="sequence variant" id="VAR_041093" description="In dbSNP:rs35789057." evidence="10">
    <original>T</original>
    <variation>I</variation>
    <location>
        <position position="458"/>
    </location>
</feature>
<feature type="sequence variant" id="VAR_041094" description="In dbSNP:rs34223841." evidence="10">
    <original>R</original>
    <variation>Q</variation>
    <location>
        <position position="809"/>
    </location>
</feature>
<feature type="sequence variant" id="VAR_041095" description="In dbSNP:rs55889697." evidence="10">
    <original>P</original>
    <variation>L</variation>
    <location>
        <position position="825"/>
    </location>
</feature>
<feature type="sequence variant" id="VAR_051667" description="In dbSNP:rs45520245.">
    <original>P</original>
    <variation>L</variation>
    <location>
        <position position="828"/>
    </location>
</feature>
<feature type="sequence variant" id="VAR_051668" description="In dbSNP:rs45586732.">
    <original>P</original>
    <variation>S</variation>
    <location>
        <position position="829"/>
    </location>
</feature>
<feature type="mutagenesis site" description="Prevents phosphorylation and activation by STK11/LKB1 complex." evidence="8">
    <original>T</original>
    <variation>A</variation>
    <location>
        <position position="175"/>
    </location>
</feature>
<feature type="mutagenesis site" description="Constitutively active." evidence="8">
    <original>T</original>
    <variation>E</variation>
    <location>
        <position position="175"/>
    </location>
</feature>
<feature type="sequence conflict" description="In Ref. 5; BAF83922." evidence="16" ref="5">
    <original>Q</original>
    <variation>H</variation>
    <location>
        <position position="192"/>
    </location>
</feature>
<feature type="sequence conflict" description="In Ref. 5; BAF83922." evidence="16" ref="5">
    <original>E</original>
    <variation>V</variation>
    <location>
        <position position="463"/>
    </location>
</feature>
<protein>
    <recommendedName>
        <fullName>Serine/threonine-protein kinase SIK2</fullName>
        <ecNumber evidence="13">2.7.11.1</ecNumber>
    </recommendedName>
    <alternativeName>
        <fullName>Qin-induced kinase</fullName>
    </alternativeName>
    <alternativeName>
        <fullName>Salt-inducible kinase 2</fullName>
        <shortName>SIK-2</shortName>
    </alternativeName>
    <alternativeName>
        <fullName>Serine/threonine-protein kinase SNF1-like kinase 2</fullName>
    </alternativeName>
</protein>
<sequence>MVMADGPRHLQRGPVRVGFYDIEGTLGKGNFAVVKLGRHRITKTEVAIKIIDKSQLDAVNLEKIYREVQIMKMLDHPHIIKLYQVMETKSMLYLVTEYAKNGEIFDYLANHGRLNESEARRKFWQILSAVDYCHGRKIVHRDLKAENLLLDNNMNIKIADFGFGNFFKSGELLATWCGSPPYAAPEVFEGQQYEGPQLDIWSMGVVLYVLVCGALPFDGPTLPILRQRVLEGRFRIPYFMSEDCEHLIRRMLVLDPSKRLTIAQIKEHKWMLIEVPVQRPVLYPQEQENEPSIGEFNEQVLRLMHSLGIDQQKTIESLQNKSYNHFAAIYFLLVERLKSHRSSFPVEQRLDGRQRRPSTIAEQTVAKAQTVGLPVTMHSPNMRLLRSALLPQASNVEAFSFPASGCQAEAAFMEEECVDTPKVNGCLLDPVPPVLVRKGCQSLPSNMMETSIDEGLETEGEAEEDPAHAFEAFQSTRSGQRRHTLSEVTNQLVVMPGAGKIFSMNDSPSLDSVDSEYDMGSVQRDLNFLEDNPSLKDIMLANQPSPRMTSPFISLRPTNPAMQALSSQKREVHNRSPVSFREGRRASDTSLTQGIVAFRQHLQNLARTKGILELNKVQLLYEQIGPEADPNLAPAAPQLQDLASSCPQEEVSQQQESVSTLPASVHPQLSPRQSLETQYLQHRLQKPSLLSKAQNTCQLYCKEPPRSLEQQLQEHRLQQKRLFLQKQSQLQAYFNQMQIAESSYPQPSQQLPLPRQETPPPSQQAPPFSLTQPLSPVLEPSSEQMQYSPFLSQYQEMQLQPLPSTSGPRAAPPLPTQLQQQQPPPPPPPPPPRQPGAAPAPLQFSYQTCELPSAASPAPDYPTPCQYPVDGAQQSDLTGPDCPRSPGLQEAPSSYDPLALSELPGLFDCEMLDAVDPQHNGYVLVN</sequence>
<dbReference type="EC" id="2.7.11.1" evidence="13"/>
<dbReference type="EMBL" id="AB018324">
    <property type="protein sequence ID" value="BAA34501.3"/>
    <property type="status" value="ALT_INIT"/>
    <property type="molecule type" value="mRNA"/>
</dbReference>
<dbReference type="EMBL" id="AL136764">
    <property type="protein sequence ID" value="CAB66698.1"/>
    <property type="molecule type" value="mRNA"/>
</dbReference>
<dbReference type="EMBL" id="AK291233">
    <property type="protein sequence ID" value="BAF83922.1"/>
    <property type="molecule type" value="mRNA"/>
</dbReference>
<dbReference type="EMBL" id="EF445030">
    <property type="protein sequence ID" value="ACA06072.1"/>
    <property type="molecule type" value="Genomic_DNA"/>
</dbReference>
<dbReference type="EMBL" id="CH471065">
    <property type="protein sequence ID" value="EAW67148.1"/>
    <property type="molecule type" value="Genomic_DNA"/>
</dbReference>
<dbReference type="EMBL" id="BC013612">
    <property type="protein sequence ID" value="AAH13612.1"/>
    <property type="molecule type" value="mRNA"/>
</dbReference>
<dbReference type="EMBL" id="BC078150">
    <property type="protein sequence ID" value="AAH78150.1"/>
    <property type="molecule type" value="mRNA"/>
</dbReference>
<dbReference type="EMBL" id="BC113459">
    <property type="protein sequence ID" value="AAI13460.1"/>
    <property type="molecule type" value="mRNA"/>
</dbReference>
<dbReference type="EMBL" id="BC117183">
    <property type="protein sequence ID" value="AAI17184.1"/>
    <property type="molecule type" value="mRNA"/>
</dbReference>
<dbReference type="EMBL" id="AB084424">
    <property type="protein sequence ID" value="BAB91442.1"/>
    <property type="molecule type" value="mRNA"/>
</dbReference>
<dbReference type="CCDS" id="CCDS8347.1"/>
<dbReference type="RefSeq" id="NP_056006.1">
    <property type="nucleotide sequence ID" value="NM_015191.3"/>
</dbReference>
<dbReference type="SMR" id="Q9H0K1"/>
<dbReference type="BioGRID" id="116840">
    <property type="interactions" value="106"/>
</dbReference>
<dbReference type="FunCoup" id="Q9H0K1">
    <property type="interactions" value="2496"/>
</dbReference>
<dbReference type="IntAct" id="Q9H0K1">
    <property type="interactions" value="44"/>
</dbReference>
<dbReference type="STRING" id="9606.ENSP00000305976"/>
<dbReference type="BindingDB" id="Q9H0K1"/>
<dbReference type="ChEMBL" id="CHEMBL5699"/>
<dbReference type="DrugBank" id="DB12010">
    <property type="generic name" value="Fostamatinib"/>
</dbReference>
<dbReference type="DrugCentral" id="Q9H0K1"/>
<dbReference type="GuidetoPHARMACOLOGY" id="2198"/>
<dbReference type="GlyGen" id="Q9H0K1">
    <property type="glycosylation" value="2 sites, 1 O-linked glycan (1 site)"/>
</dbReference>
<dbReference type="iPTMnet" id="Q9H0K1"/>
<dbReference type="PhosphoSitePlus" id="Q9H0K1"/>
<dbReference type="BioMuta" id="SIK2"/>
<dbReference type="DMDM" id="59798973"/>
<dbReference type="jPOST" id="Q9H0K1"/>
<dbReference type="MassIVE" id="Q9H0K1"/>
<dbReference type="PaxDb" id="9606-ENSP00000305976"/>
<dbReference type="PeptideAtlas" id="Q9H0K1"/>
<dbReference type="ProteomicsDB" id="80290"/>
<dbReference type="Pumba" id="Q9H0K1"/>
<dbReference type="Antibodypedia" id="18251">
    <property type="antibodies" value="308 antibodies from 34 providers"/>
</dbReference>
<dbReference type="DNASU" id="23235"/>
<dbReference type="Ensembl" id="ENST00000304987.4">
    <property type="protein sequence ID" value="ENSP00000305976.3"/>
    <property type="gene ID" value="ENSG00000170145.5"/>
</dbReference>
<dbReference type="GeneID" id="23235"/>
<dbReference type="KEGG" id="hsa:23235"/>
<dbReference type="MANE-Select" id="ENST00000304987.4">
    <property type="protein sequence ID" value="ENSP00000305976.3"/>
    <property type="RefSeq nucleotide sequence ID" value="NM_015191.3"/>
    <property type="RefSeq protein sequence ID" value="NP_056006.1"/>
</dbReference>
<dbReference type="UCSC" id="uc001plt.4">
    <property type="organism name" value="human"/>
</dbReference>
<dbReference type="AGR" id="HGNC:21680"/>
<dbReference type="CTD" id="23235"/>
<dbReference type="DisGeNET" id="23235"/>
<dbReference type="GeneCards" id="SIK2"/>
<dbReference type="HGNC" id="HGNC:21680">
    <property type="gene designation" value="SIK2"/>
</dbReference>
<dbReference type="HPA" id="ENSG00000170145">
    <property type="expression patterns" value="Low tissue specificity"/>
</dbReference>
<dbReference type="MIM" id="608973">
    <property type="type" value="gene"/>
</dbReference>
<dbReference type="neXtProt" id="NX_Q9H0K1"/>
<dbReference type="OpenTargets" id="ENSG00000170145"/>
<dbReference type="PharmGKB" id="PA164725750"/>
<dbReference type="VEuPathDB" id="HostDB:ENSG00000170145"/>
<dbReference type="eggNOG" id="KOG0586">
    <property type="taxonomic scope" value="Eukaryota"/>
</dbReference>
<dbReference type="GeneTree" id="ENSGT00940000156445"/>
<dbReference type="HOGENOM" id="CLU_000288_87_0_1"/>
<dbReference type="InParanoid" id="Q9H0K1"/>
<dbReference type="OMA" id="GPPMTIR"/>
<dbReference type="OrthoDB" id="193931at2759"/>
<dbReference type="PAN-GO" id="Q9H0K1">
    <property type="GO annotations" value="5 GO annotations based on evolutionary models"/>
</dbReference>
<dbReference type="PhylomeDB" id="Q9H0K1"/>
<dbReference type="TreeFam" id="TF315213"/>
<dbReference type="PathwayCommons" id="Q9H0K1"/>
<dbReference type="SignaLink" id="Q9H0K1"/>
<dbReference type="SIGNOR" id="Q9H0K1"/>
<dbReference type="BioGRID-ORCS" id="23235">
    <property type="hits" value="12 hits in 1193 CRISPR screens"/>
</dbReference>
<dbReference type="CD-CODE" id="8C2F96ED">
    <property type="entry name" value="Centrosome"/>
</dbReference>
<dbReference type="ChiTaRS" id="SIK2">
    <property type="organism name" value="human"/>
</dbReference>
<dbReference type="GeneWiki" id="SNF1LK2"/>
<dbReference type="GenomeRNAi" id="23235"/>
<dbReference type="Pharos" id="Q9H0K1">
    <property type="development level" value="Tchem"/>
</dbReference>
<dbReference type="PRO" id="PR:Q9H0K1"/>
<dbReference type="Proteomes" id="UP000005640">
    <property type="component" value="Chromosome 11"/>
</dbReference>
<dbReference type="RNAct" id="Q9H0K1">
    <property type="molecule type" value="protein"/>
</dbReference>
<dbReference type="Bgee" id="ENSG00000170145">
    <property type="expression patterns" value="Expressed in choroid plexus epithelium and 218 other cell types or tissues"/>
</dbReference>
<dbReference type="ExpressionAtlas" id="Q9H0K1">
    <property type="expression patterns" value="baseline and differential"/>
</dbReference>
<dbReference type="GO" id="GO:0005737">
    <property type="term" value="C:cytoplasm"/>
    <property type="evidence" value="ECO:0000250"/>
    <property type="project" value="UniProtKB"/>
</dbReference>
<dbReference type="GO" id="GO:0005789">
    <property type="term" value="C:endoplasmic reticulum membrane"/>
    <property type="evidence" value="ECO:0000314"/>
    <property type="project" value="UniProt"/>
</dbReference>
<dbReference type="GO" id="GO:0005634">
    <property type="term" value="C:nucleus"/>
    <property type="evidence" value="ECO:0000318"/>
    <property type="project" value="GO_Central"/>
</dbReference>
<dbReference type="GO" id="GO:0005524">
    <property type="term" value="F:ATP binding"/>
    <property type="evidence" value="ECO:0000314"/>
    <property type="project" value="UniProtKB"/>
</dbReference>
<dbReference type="GO" id="GO:0000287">
    <property type="term" value="F:magnesium ion binding"/>
    <property type="evidence" value="ECO:0000314"/>
    <property type="project" value="UniProtKB"/>
</dbReference>
<dbReference type="GO" id="GO:0106310">
    <property type="term" value="F:protein serine kinase activity"/>
    <property type="evidence" value="ECO:0000314"/>
    <property type="project" value="UniProt"/>
</dbReference>
<dbReference type="GO" id="GO:0004674">
    <property type="term" value="F:protein serine/threonine kinase activity"/>
    <property type="evidence" value="ECO:0000314"/>
    <property type="project" value="UniProtKB"/>
</dbReference>
<dbReference type="GO" id="GO:0035556">
    <property type="term" value="P:intracellular signal transduction"/>
    <property type="evidence" value="ECO:0000314"/>
    <property type="project" value="UniProtKB"/>
</dbReference>
<dbReference type="GO" id="GO:0046777">
    <property type="term" value="P:protein autophosphorylation"/>
    <property type="evidence" value="ECO:0000314"/>
    <property type="project" value="UniProtKB"/>
</dbReference>
<dbReference type="GO" id="GO:0006468">
    <property type="term" value="P:protein phosphorylation"/>
    <property type="evidence" value="ECO:0000314"/>
    <property type="project" value="UniProtKB"/>
</dbReference>
<dbReference type="GO" id="GO:0046626">
    <property type="term" value="P:regulation of insulin receptor signaling pathway"/>
    <property type="evidence" value="ECO:0000250"/>
    <property type="project" value="UniProtKB"/>
</dbReference>
<dbReference type="CDD" id="cd14071">
    <property type="entry name" value="STKc_SIK"/>
    <property type="match status" value="1"/>
</dbReference>
<dbReference type="CDD" id="cd14409">
    <property type="entry name" value="UBA_SIK2"/>
    <property type="match status" value="1"/>
</dbReference>
<dbReference type="FunFam" id="3.30.200.20:FF:000003">
    <property type="entry name" value="Non-specific serine/threonine protein kinase"/>
    <property type="match status" value="1"/>
</dbReference>
<dbReference type="FunFam" id="1.10.510.10:FF:000154">
    <property type="entry name" value="Serine/threonine-protein kinase SIK2"/>
    <property type="match status" value="1"/>
</dbReference>
<dbReference type="Gene3D" id="1.10.510.10">
    <property type="entry name" value="Transferase(Phosphotransferase) domain 1"/>
    <property type="match status" value="1"/>
</dbReference>
<dbReference type="InterPro" id="IPR011009">
    <property type="entry name" value="Kinase-like_dom_sf"/>
</dbReference>
<dbReference type="InterPro" id="IPR000719">
    <property type="entry name" value="Prot_kinase_dom"/>
</dbReference>
<dbReference type="InterPro" id="IPR017441">
    <property type="entry name" value="Protein_kinase_ATP_BS"/>
</dbReference>
<dbReference type="InterPro" id="IPR008271">
    <property type="entry name" value="Ser/Thr_kinase_AS"/>
</dbReference>
<dbReference type="InterPro" id="IPR017090">
    <property type="entry name" value="Ser/Thr_kinase_SIK1/2"/>
</dbReference>
<dbReference type="InterPro" id="IPR034672">
    <property type="entry name" value="SIK"/>
</dbReference>
<dbReference type="InterPro" id="IPR015940">
    <property type="entry name" value="UBA"/>
</dbReference>
<dbReference type="PANTHER" id="PTHR24346">
    <property type="entry name" value="MAP/MICROTUBULE AFFINITY-REGULATING KINASE"/>
    <property type="match status" value="1"/>
</dbReference>
<dbReference type="PANTHER" id="PTHR24346:SF38">
    <property type="entry name" value="NON-SPECIFIC SERINE_THREONINE PROTEIN KINASE"/>
    <property type="match status" value="1"/>
</dbReference>
<dbReference type="Pfam" id="PF00069">
    <property type="entry name" value="Pkinase"/>
    <property type="match status" value="1"/>
</dbReference>
<dbReference type="Pfam" id="PF23312">
    <property type="entry name" value="UBA_SIK3"/>
    <property type="match status" value="1"/>
</dbReference>
<dbReference type="PIRSF" id="PIRSF037014">
    <property type="entry name" value="Ser/Thr_PK_SNF1-like"/>
    <property type="match status" value="1"/>
</dbReference>
<dbReference type="SMART" id="SM00220">
    <property type="entry name" value="S_TKc"/>
    <property type="match status" value="1"/>
</dbReference>
<dbReference type="SUPFAM" id="SSF56112">
    <property type="entry name" value="Protein kinase-like (PK-like)"/>
    <property type="match status" value="1"/>
</dbReference>
<dbReference type="PROSITE" id="PS00107">
    <property type="entry name" value="PROTEIN_KINASE_ATP"/>
    <property type="match status" value="1"/>
</dbReference>
<dbReference type="PROSITE" id="PS50011">
    <property type="entry name" value="PROTEIN_KINASE_DOM"/>
    <property type="match status" value="1"/>
</dbReference>
<dbReference type="PROSITE" id="PS00108">
    <property type="entry name" value="PROTEIN_KINASE_ST"/>
    <property type="match status" value="1"/>
</dbReference>
<dbReference type="PROSITE" id="PS50030">
    <property type="entry name" value="UBA"/>
    <property type="match status" value="1"/>
</dbReference>
<reference evidence="16" key="1">
    <citation type="journal article" date="2004" name="EMBO J.">
        <title>LKB1 is a master kinase that activates 13 kinases of the AMPK subfamily, including MARK/PAR-1.</title>
        <authorList>
            <person name="Lizcano J.M."/>
            <person name="Goeransson O."/>
            <person name="Toth R."/>
            <person name="Deak M."/>
            <person name="Morrice N.A."/>
            <person name="Boudeau J."/>
            <person name="Hawley S.A."/>
            <person name="Udd L."/>
            <person name="Maekelae T.P."/>
            <person name="Hardie D.G."/>
            <person name="Alessi D.R."/>
        </authorList>
    </citation>
    <scope>NUCLEOTIDE SEQUENCE [MRNA]</scope>
    <scope>ACTIVITY REGULATION</scope>
    <scope>PHOSPHORYLATION AT THR-175</scope>
    <scope>MUTAGENESIS OF THR-175</scope>
</reference>
<reference evidence="16 19" key="2">
    <citation type="journal article" date="1998" name="DNA Res.">
        <title>Prediction of the coding sequences of unidentified human genes. XI. The complete sequences of 100 new cDNA clones from brain which code for large proteins in vitro.</title>
        <authorList>
            <person name="Nagase T."/>
            <person name="Ishikawa K."/>
            <person name="Suyama M."/>
            <person name="Kikuno R."/>
            <person name="Miyajima N."/>
            <person name="Tanaka A."/>
            <person name="Kotani H."/>
            <person name="Nomura N."/>
            <person name="Ohara O."/>
        </authorList>
    </citation>
    <scope>NUCLEOTIDE SEQUENCE [LARGE SCALE MRNA]</scope>
    <source>
        <tissue evidence="19">Brain</tissue>
    </source>
</reference>
<reference evidence="16" key="3">
    <citation type="journal article" date="2002" name="DNA Res.">
        <title>Construction of expression-ready cDNA clones for KIAA genes: manual curation of 330 KIAA cDNA clones.</title>
        <authorList>
            <person name="Nakajima D."/>
            <person name="Okazaki N."/>
            <person name="Yamakawa H."/>
            <person name="Kikuno R."/>
            <person name="Ohara O."/>
            <person name="Nagase T."/>
        </authorList>
    </citation>
    <scope>SEQUENCE REVISION</scope>
</reference>
<reference evidence="16 21" key="4">
    <citation type="journal article" date="2001" name="Genome Res.">
        <title>Towards a catalog of human genes and proteins: sequencing and analysis of 500 novel complete protein coding human cDNAs.</title>
        <authorList>
            <person name="Wiemann S."/>
            <person name="Weil B."/>
            <person name="Wellenreuther R."/>
            <person name="Gassenhuber J."/>
            <person name="Glassl S."/>
            <person name="Ansorge W."/>
            <person name="Boecher M."/>
            <person name="Bloecker H."/>
            <person name="Bauersachs S."/>
            <person name="Blum H."/>
            <person name="Lauber J."/>
            <person name="Duesterhoeft A."/>
            <person name="Beyer A."/>
            <person name="Koehrer K."/>
            <person name="Strack N."/>
            <person name="Mewes H.-W."/>
            <person name="Ottenwaelder B."/>
            <person name="Obermaier B."/>
            <person name="Tampe J."/>
            <person name="Heubner D."/>
            <person name="Wambutt R."/>
            <person name="Korn B."/>
            <person name="Klein M."/>
            <person name="Poustka A."/>
        </authorList>
    </citation>
    <scope>NUCLEOTIDE SEQUENCE [LARGE SCALE MRNA]</scope>
</reference>
<reference key="5">
    <citation type="journal article" date="2004" name="Nat. Genet.">
        <title>Complete sequencing and characterization of 21,243 full-length human cDNAs.</title>
        <authorList>
            <person name="Ota T."/>
            <person name="Suzuki Y."/>
            <person name="Nishikawa T."/>
            <person name="Otsuki T."/>
            <person name="Sugiyama T."/>
            <person name="Irie R."/>
            <person name="Wakamatsu A."/>
            <person name="Hayashi K."/>
            <person name="Sato H."/>
            <person name="Nagai K."/>
            <person name="Kimura K."/>
            <person name="Makita H."/>
            <person name="Sekine M."/>
            <person name="Obayashi M."/>
            <person name="Nishi T."/>
            <person name="Shibahara T."/>
            <person name="Tanaka T."/>
            <person name="Ishii S."/>
            <person name="Yamamoto J."/>
            <person name="Saito K."/>
            <person name="Kawai Y."/>
            <person name="Isono Y."/>
            <person name="Nakamura Y."/>
            <person name="Nagahari K."/>
            <person name="Murakami K."/>
            <person name="Yasuda T."/>
            <person name="Iwayanagi T."/>
            <person name="Wagatsuma M."/>
            <person name="Shiratori A."/>
            <person name="Sudo H."/>
            <person name="Hosoiri T."/>
            <person name="Kaku Y."/>
            <person name="Kodaira H."/>
            <person name="Kondo H."/>
            <person name="Sugawara M."/>
            <person name="Takahashi M."/>
            <person name="Kanda K."/>
            <person name="Yokoi T."/>
            <person name="Furuya T."/>
            <person name="Kikkawa E."/>
            <person name="Omura Y."/>
            <person name="Abe K."/>
            <person name="Kamihara K."/>
            <person name="Katsuta N."/>
            <person name="Sato K."/>
            <person name="Tanikawa M."/>
            <person name="Yamazaki M."/>
            <person name="Ninomiya K."/>
            <person name="Ishibashi T."/>
            <person name="Yamashita H."/>
            <person name="Murakawa K."/>
            <person name="Fujimori K."/>
            <person name="Tanai H."/>
            <person name="Kimata M."/>
            <person name="Watanabe M."/>
            <person name="Hiraoka S."/>
            <person name="Chiba Y."/>
            <person name="Ishida S."/>
            <person name="Ono Y."/>
            <person name="Takiguchi S."/>
            <person name="Watanabe S."/>
            <person name="Yosida M."/>
            <person name="Hotuta T."/>
            <person name="Kusano J."/>
            <person name="Kanehori K."/>
            <person name="Takahashi-Fujii A."/>
            <person name="Hara H."/>
            <person name="Tanase T.-O."/>
            <person name="Nomura Y."/>
            <person name="Togiya S."/>
            <person name="Komai F."/>
            <person name="Hara R."/>
            <person name="Takeuchi K."/>
            <person name="Arita M."/>
            <person name="Imose N."/>
            <person name="Musashino K."/>
            <person name="Yuuki H."/>
            <person name="Oshima A."/>
            <person name="Sasaki N."/>
            <person name="Aotsuka S."/>
            <person name="Yoshikawa Y."/>
            <person name="Matsunawa H."/>
            <person name="Ichihara T."/>
            <person name="Shiohata N."/>
            <person name="Sano S."/>
            <person name="Moriya S."/>
            <person name="Momiyama H."/>
            <person name="Satoh N."/>
            <person name="Takami S."/>
            <person name="Terashima Y."/>
            <person name="Suzuki O."/>
            <person name="Nakagawa S."/>
            <person name="Senoh A."/>
            <person name="Mizoguchi H."/>
            <person name="Goto Y."/>
            <person name="Shimizu F."/>
            <person name="Wakebe H."/>
            <person name="Hishigaki H."/>
            <person name="Watanabe T."/>
            <person name="Sugiyama A."/>
            <person name="Takemoto M."/>
            <person name="Kawakami B."/>
            <person name="Yamazaki M."/>
            <person name="Watanabe K."/>
            <person name="Kumagai A."/>
            <person name="Itakura S."/>
            <person name="Fukuzumi Y."/>
            <person name="Fujimori Y."/>
            <person name="Komiyama M."/>
            <person name="Tashiro H."/>
            <person name="Tanigami A."/>
            <person name="Fujiwara T."/>
            <person name="Ono T."/>
            <person name="Yamada K."/>
            <person name="Fujii Y."/>
            <person name="Ozaki K."/>
            <person name="Hirao M."/>
            <person name="Ohmori Y."/>
            <person name="Kawabata A."/>
            <person name="Hikiji T."/>
            <person name="Kobatake N."/>
            <person name="Inagaki H."/>
            <person name="Ikema Y."/>
            <person name="Okamoto S."/>
            <person name="Okitani R."/>
            <person name="Kawakami T."/>
            <person name="Noguchi S."/>
            <person name="Itoh T."/>
            <person name="Shigeta K."/>
            <person name="Senba T."/>
            <person name="Matsumura K."/>
            <person name="Nakajima Y."/>
            <person name="Mizuno T."/>
            <person name="Morinaga M."/>
            <person name="Sasaki M."/>
            <person name="Togashi T."/>
            <person name="Oyama M."/>
            <person name="Hata H."/>
            <person name="Watanabe M."/>
            <person name="Komatsu T."/>
            <person name="Mizushima-Sugano J."/>
            <person name="Satoh T."/>
            <person name="Shirai Y."/>
            <person name="Takahashi Y."/>
            <person name="Nakagawa K."/>
            <person name="Okumura K."/>
            <person name="Nagase T."/>
            <person name="Nomura N."/>
            <person name="Kikuchi H."/>
            <person name="Masuho Y."/>
            <person name="Yamashita R."/>
            <person name="Nakai K."/>
            <person name="Yada T."/>
            <person name="Nakamura Y."/>
            <person name="Ohara O."/>
            <person name="Isogai T."/>
            <person name="Sugano S."/>
        </authorList>
    </citation>
    <scope>NUCLEOTIDE SEQUENCE [LARGE SCALE MRNA]</scope>
</reference>
<reference evidence="16 20" key="6">
    <citation type="submission" date="2007-02" db="EMBL/GenBank/DDBJ databases">
        <authorList>
            <consortium name="NHLBI resequencing and genotyping service (RS&amp;G)"/>
        </authorList>
    </citation>
    <scope>NUCLEOTIDE SEQUENCE [GENOMIC DNA]</scope>
</reference>
<reference evidence="16 20" key="7">
    <citation type="submission" date="2005-07" db="EMBL/GenBank/DDBJ databases">
        <authorList>
            <person name="Mural R.J."/>
            <person name="Istrail S."/>
            <person name="Sutton G.G."/>
            <person name="Florea L."/>
            <person name="Halpern A.L."/>
            <person name="Mobarry C.M."/>
            <person name="Lippert R."/>
            <person name="Walenz B."/>
            <person name="Shatkay H."/>
            <person name="Dew I."/>
            <person name="Miller J.R."/>
            <person name="Flanigan M.J."/>
            <person name="Edwards N.J."/>
            <person name="Bolanos R."/>
            <person name="Fasulo D."/>
            <person name="Halldorsson B.V."/>
            <person name="Hannenhalli S."/>
            <person name="Turner R."/>
            <person name="Yooseph S."/>
            <person name="Lu F."/>
            <person name="Nusskern D.R."/>
            <person name="Shue B.C."/>
            <person name="Zheng X.H."/>
            <person name="Zhong F."/>
            <person name="Delcher A.L."/>
            <person name="Huson D.H."/>
            <person name="Kravitz S.A."/>
            <person name="Mouchard L."/>
            <person name="Reinert K."/>
            <person name="Remington K.A."/>
            <person name="Clark A.G."/>
            <person name="Waterman M.S."/>
            <person name="Eichler E.E."/>
            <person name="Adams M.D."/>
            <person name="Hunkapiller M.W."/>
            <person name="Myers E.W."/>
            <person name="Venter J.C."/>
        </authorList>
    </citation>
    <scope>NUCLEOTIDE SEQUENCE [LARGE SCALE GENOMIC DNA]</scope>
</reference>
<reference evidence="16 18" key="8">
    <citation type="journal article" date="2004" name="Genome Res.">
        <title>The status, quality, and expansion of the NIH full-length cDNA project: the Mammalian Gene Collection (MGC).</title>
        <authorList>
            <consortium name="The MGC Project Team"/>
        </authorList>
    </citation>
    <scope>NUCLEOTIDE SEQUENCE [LARGE SCALE MRNA]</scope>
    <source>
        <tissue>Colon</tissue>
        <tissue evidence="17">Lung</tissue>
        <tissue evidence="18">Testis</tissue>
    </source>
</reference>
<reference evidence="16 20" key="9">
    <citation type="submission" date="2002-04" db="EMBL/GenBank/DDBJ databases">
        <title>A cDNA fragment encoding an active serine-kinase, Homo sapiens KIAA0781 protein.</title>
        <authorList>
            <person name="Takemori H."/>
        </authorList>
    </citation>
    <scope>NUCLEOTIDE SEQUENCE [MRNA] OF 3-926</scope>
</reference>
<reference key="10">
    <citation type="journal article" date="2004" name="Cell">
        <title>The CREB coactivator TORC2 functions as a calcium- and cAMP-sensitive coincidence detector.</title>
        <authorList>
            <person name="Screaton R.A."/>
            <person name="Conkright M.D."/>
            <person name="Katoh Y."/>
            <person name="Best J.L."/>
            <person name="Canettieri G."/>
            <person name="Jeffries S."/>
            <person name="Guzman E."/>
            <person name="Niessen S."/>
            <person name="Yates J.R. III"/>
            <person name="Takemori H."/>
            <person name="Okamoto M."/>
            <person name="Montminy M."/>
        </authorList>
    </citation>
    <scope>INTERACTION WITH CRTC2</scope>
    <scope>FUNCTION</scope>
</reference>
<reference key="11">
    <citation type="journal article" date="2008" name="Proc. Natl. Acad. Sci. U.S.A.">
        <title>A quantitative atlas of mitotic phosphorylation.</title>
        <authorList>
            <person name="Dephoure N."/>
            <person name="Zhou C."/>
            <person name="Villen J."/>
            <person name="Beausoleil S.A."/>
            <person name="Bakalarski C.E."/>
            <person name="Elledge S.J."/>
            <person name="Gygi S.P."/>
        </authorList>
    </citation>
    <scope>PHOSPHORYLATION [LARGE SCALE ANALYSIS] AT SER-587</scope>
    <scope>IDENTIFICATION BY MASS SPECTROMETRY [LARGE SCALE ANALYSIS]</scope>
    <source>
        <tissue>Cervix carcinoma</tissue>
    </source>
</reference>
<reference key="12">
    <citation type="journal article" date="2009" name="Mol. Cell. Proteomics">
        <title>Large-scale proteomics analysis of the human kinome.</title>
        <authorList>
            <person name="Oppermann F.S."/>
            <person name="Gnad F."/>
            <person name="Olsen J.V."/>
            <person name="Hornberger R."/>
            <person name="Greff Z."/>
            <person name="Keri G."/>
            <person name="Mann M."/>
            <person name="Daub H."/>
        </authorList>
    </citation>
    <scope>PHOSPHORYLATION [LARGE SCALE ANALYSIS] AT THR-25</scope>
    <scope>IDENTIFICATION BY MASS SPECTROMETRY [LARGE SCALE ANALYSIS]</scope>
</reference>
<reference key="13">
    <citation type="journal article" date="2009" name="Sci. Signal.">
        <title>Quantitative phosphoproteomic analysis of T cell receptor signaling reveals system-wide modulation of protein-protein interactions.</title>
        <authorList>
            <person name="Mayya V."/>
            <person name="Lundgren D.H."/>
            <person name="Hwang S.-I."/>
            <person name="Rezaul K."/>
            <person name="Wu L."/>
            <person name="Eng J.K."/>
            <person name="Rodionov V."/>
            <person name="Han D.K."/>
        </authorList>
    </citation>
    <scope>PHOSPHORYLATION [LARGE SCALE ANALYSIS] AT SER-587</scope>
    <scope>IDENTIFICATION BY MASS SPECTROMETRY [LARGE SCALE ANALYSIS]</scope>
    <source>
        <tissue>Leukemic T-cell</tissue>
    </source>
</reference>
<reference key="14">
    <citation type="journal article" date="2010" name="J. Clin. Invest.">
        <title>Salt-inducible kinase 2 links transcriptional coactivator p300 phosphorylation to the prevention of ChREBP-dependent hepatic steatosis in mice.</title>
        <authorList>
            <person name="Bricambert J."/>
            <person name="Miranda J."/>
            <person name="Benhamed F."/>
            <person name="Girard J."/>
            <person name="Postic C."/>
            <person name="Dentin R."/>
        </authorList>
    </citation>
    <scope>FUNCTION</scope>
</reference>
<reference key="15">
    <citation type="journal article" date="2013" name="J. Biol. Chem.">
        <title>Reversible acetylation regulates salt-inducible kinase (SIK2) and its function in autophagy.</title>
        <authorList>
            <person name="Yang F.C."/>
            <person name="Tan B.C."/>
            <person name="Chen W.H."/>
            <person name="Lin Y.H."/>
            <person name="Huang J.Y."/>
            <person name="Chang H.Y."/>
            <person name="Sun H.Y."/>
            <person name="Hsu P.H."/>
            <person name="Liou G.G."/>
            <person name="Shen J."/>
            <person name="Chang C.J."/>
            <person name="Han C.C."/>
            <person name="Tsai M.D."/>
            <person name="Lee S.C."/>
        </authorList>
    </citation>
    <scope>ACETYLATION AT LYS-53</scope>
    <scope>FUNCTION</scope>
</reference>
<reference key="16">
    <citation type="journal article" date="2013" name="J. Biol. Chem.">
        <title>Interaction between salt-inducible kinase 2 (SIK2) and p97/valosin-containing protein (VCP) regulates endoplasmic reticulum (ER)-associated protein degradation in mammalian cells.</title>
        <authorList>
            <person name="Yang F.C."/>
            <person name="Lin Y.H."/>
            <person name="Chen W.H."/>
            <person name="Huang J.Y."/>
            <person name="Chang H.Y."/>
            <person name="Su S.H."/>
            <person name="Wang H.T."/>
            <person name="Chiang C.Y."/>
            <person name="Hsu P.H."/>
            <person name="Tsai M.D."/>
            <person name="Tan B.C."/>
            <person name="Lee S.C."/>
        </authorList>
    </citation>
    <scope>FUNCTION</scope>
    <scope>SUBCELLULAR LOCATION</scope>
    <scope>CATALYTIC ACTIVITY</scope>
</reference>
<reference key="17">
    <citation type="journal article" date="2013" name="J. Proteome Res.">
        <title>Toward a comprehensive characterization of a human cancer cell phosphoproteome.</title>
        <authorList>
            <person name="Zhou H."/>
            <person name="Di Palma S."/>
            <person name="Preisinger C."/>
            <person name="Peng M."/>
            <person name="Polat A.N."/>
            <person name="Heck A.J."/>
            <person name="Mohammed S."/>
        </authorList>
    </citation>
    <scope>PHOSPHORYLATION [LARGE SCALE ANALYSIS] AT SER-587</scope>
    <scope>IDENTIFICATION BY MASS SPECTROMETRY [LARGE SCALE ANALYSIS]</scope>
    <source>
        <tissue>Cervix carcinoma</tissue>
        <tissue>Erythroleukemia</tissue>
    </source>
</reference>
<reference key="18">
    <citation type="journal article" date="2014" name="J. Proteomics">
        <title>An enzyme assisted RP-RPLC approach for in-depth analysis of human liver phosphoproteome.</title>
        <authorList>
            <person name="Bian Y."/>
            <person name="Song C."/>
            <person name="Cheng K."/>
            <person name="Dong M."/>
            <person name="Wang F."/>
            <person name="Huang J."/>
            <person name="Sun D."/>
            <person name="Wang L."/>
            <person name="Ye M."/>
            <person name="Zou H."/>
        </authorList>
    </citation>
    <scope>PHOSPHORYLATION [LARGE SCALE ANALYSIS] AT SER-587</scope>
    <scope>IDENTIFICATION BY MASS SPECTROMETRY [LARGE SCALE ANALYSIS]</scope>
    <source>
        <tissue>Liver</tissue>
    </source>
</reference>
<reference key="19">
    <citation type="journal article" date="2016" name="Sci. Rep.">
        <title>SIK2 regulates fasting-induced PPARalpha activity and ketogenesis through p300.</title>
        <authorList>
            <person name="Zhang Z.N."/>
            <person name="Gong L."/>
            <person name="Lv S."/>
            <person name="Li J."/>
            <person name="Tai X."/>
            <person name="Cao W."/>
            <person name="Peng B."/>
            <person name="Qu S."/>
            <person name="Li W."/>
            <person name="Zhang C."/>
            <person name="Luan B."/>
        </authorList>
    </citation>
    <scope>FUNCTION</scope>
</reference>
<reference key="20">
    <citation type="journal article" date="2019" name="Cell. Signal.">
        <title>Insulin induces Thr484 phosphorylation and stabilization of SIK2 in adipocytes.</title>
        <authorList>
            <person name="Saell J."/>
            <person name="Negoita F."/>
            <person name="Hansson B."/>
            <person name="Kopietz F."/>
            <person name="Linder W."/>
            <person name="Pettersson A.M.L."/>
            <person name="Ekelund M."/>
            <person name="Laurencikiene J."/>
            <person name="Degerman E."/>
            <person name="Stenkula K.G."/>
            <person name="Goeransson O."/>
        </authorList>
    </citation>
    <scope>PHOSPHORYLATION AT THR-484</scope>
</reference>
<reference key="21">
    <citation type="journal article" date="2007" name="Nature">
        <title>Patterns of somatic mutation in human cancer genomes.</title>
        <authorList>
            <person name="Greenman C."/>
            <person name="Stephens P."/>
            <person name="Smith R."/>
            <person name="Dalgliesh G.L."/>
            <person name="Hunter C."/>
            <person name="Bignell G."/>
            <person name="Davies H."/>
            <person name="Teague J."/>
            <person name="Butler A."/>
            <person name="Stevens C."/>
            <person name="Edkins S."/>
            <person name="O'Meara S."/>
            <person name="Vastrik I."/>
            <person name="Schmidt E.E."/>
            <person name="Avis T."/>
            <person name="Barthorpe S."/>
            <person name="Bhamra G."/>
            <person name="Buck G."/>
            <person name="Choudhury B."/>
            <person name="Clements J."/>
            <person name="Cole J."/>
            <person name="Dicks E."/>
            <person name="Forbes S."/>
            <person name="Gray K."/>
            <person name="Halliday K."/>
            <person name="Harrison R."/>
            <person name="Hills K."/>
            <person name="Hinton J."/>
            <person name="Jenkinson A."/>
            <person name="Jones D."/>
            <person name="Menzies A."/>
            <person name="Mironenko T."/>
            <person name="Perry J."/>
            <person name="Raine K."/>
            <person name="Richardson D."/>
            <person name="Shepherd R."/>
            <person name="Small A."/>
            <person name="Tofts C."/>
            <person name="Varian J."/>
            <person name="Webb T."/>
            <person name="West S."/>
            <person name="Widaa S."/>
            <person name="Yates A."/>
            <person name="Cahill D.P."/>
            <person name="Louis D.N."/>
            <person name="Goldstraw P."/>
            <person name="Nicholson A.G."/>
            <person name="Brasseur F."/>
            <person name="Looijenga L."/>
            <person name="Weber B.L."/>
            <person name="Chiew Y.-E."/>
            <person name="DeFazio A."/>
            <person name="Greaves M.F."/>
            <person name="Green A.R."/>
            <person name="Campbell P."/>
            <person name="Birney E."/>
            <person name="Easton D.F."/>
            <person name="Chenevix-Trench G."/>
            <person name="Tan M.-H."/>
            <person name="Khoo S.K."/>
            <person name="Teh B.T."/>
            <person name="Yuen S.T."/>
            <person name="Leung S.Y."/>
            <person name="Wooster R."/>
            <person name="Futreal P.A."/>
            <person name="Stratton M.R."/>
        </authorList>
    </citation>
    <scope>VARIANTS [LARGE SCALE ANALYSIS] ILE-458; GLN-809 AND LEU-825</scope>
</reference>
<keyword id="KW-0007">Acetylation</keyword>
<keyword id="KW-0067">ATP-binding</keyword>
<keyword id="KW-0963">Cytoplasm</keyword>
<keyword id="KW-0256">Endoplasmic reticulum</keyword>
<keyword id="KW-0418">Kinase</keyword>
<keyword id="KW-0460">Magnesium</keyword>
<keyword id="KW-0472">Membrane</keyword>
<keyword id="KW-0479">Metal-binding</keyword>
<keyword id="KW-0547">Nucleotide-binding</keyword>
<keyword id="KW-0597">Phosphoprotein</keyword>
<keyword id="KW-1267">Proteomics identification</keyword>
<keyword id="KW-1185">Reference proteome</keyword>
<keyword id="KW-0723">Serine/threonine-protein kinase</keyword>
<keyword id="KW-0808">Transferase</keyword>